<protein>
    <recommendedName>
        <fullName evidence="1">Succinate--CoA ligase [ADP-forming] subunit beta</fullName>
        <ecNumber evidence="1">6.2.1.5</ecNumber>
    </recommendedName>
    <alternativeName>
        <fullName evidence="1">Succinyl-CoA synthetase subunit beta</fullName>
        <shortName evidence="1">SCS-beta</shortName>
    </alternativeName>
</protein>
<keyword id="KW-0067">ATP-binding</keyword>
<keyword id="KW-0436">Ligase</keyword>
<keyword id="KW-0460">Magnesium</keyword>
<keyword id="KW-0479">Metal-binding</keyword>
<keyword id="KW-0547">Nucleotide-binding</keyword>
<keyword id="KW-1185">Reference proteome</keyword>
<keyword id="KW-0816">Tricarboxylic acid cycle</keyword>
<feature type="chain" id="PRO_1000212033" description="Succinate--CoA ligase [ADP-forming] subunit beta">
    <location>
        <begin position="1"/>
        <end position="389"/>
    </location>
</feature>
<feature type="domain" description="ATP-grasp" evidence="1">
    <location>
        <begin position="9"/>
        <end position="244"/>
    </location>
</feature>
<feature type="binding site" evidence="1">
    <location>
        <position position="46"/>
    </location>
    <ligand>
        <name>ATP</name>
        <dbReference type="ChEBI" id="CHEBI:30616"/>
    </ligand>
</feature>
<feature type="binding site" evidence="1">
    <location>
        <begin position="53"/>
        <end position="55"/>
    </location>
    <ligand>
        <name>ATP</name>
        <dbReference type="ChEBI" id="CHEBI:30616"/>
    </ligand>
</feature>
<feature type="binding site" evidence="1">
    <location>
        <position position="99"/>
    </location>
    <ligand>
        <name>ATP</name>
        <dbReference type="ChEBI" id="CHEBI:30616"/>
    </ligand>
</feature>
<feature type="binding site" evidence="1">
    <location>
        <position position="102"/>
    </location>
    <ligand>
        <name>ATP</name>
        <dbReference type="ChEBI" id="CHEBI:30616"/>
    </ligand>
</feature>
<feature type="binding site" evidence="1">
    <location>
        <position position="107"/>
    </location>
    <ligand>
        <name>ATP</name>
        <dbReference type="ChEBI" id="CHEBI:30616"/>
    </ligand>
</feature>
<feature type="binding site" evidence="1">
    <location>
        <position position="199"/>
    </location>
    <ligand>
        <name>Mg(2+)</name>
        <dbReference type="ChEBI" id="CHEBI:18420"/>
    </ligand>
</feature>
<feature type="binding site" evidence="1">
    <location>
        <position position="213"/>
    </location>
    <ligand>
        <name>Mg(2+)</name>
        <dbReference type="ChEBI" id="CHEBI:18420"/>
    </ligand>
</feature>
<feature type="binding site" evidence="1">
    <location>
        <position position="264"/>
    </location>
    <ligand>
        <name>substrate</name>
        <note>ligand shared with subunit alpha</note>
    </ligand>
</feature>
<feature type="binding site" evidence="1">
    <location>
        <begin position="321"/>
        <end position="323"/>
    </location>
    <ligand>
        <name>substrate</name>
        <note>ligand shared with subunit alpha</note>
    </ligand>
</feature>
<gene>
    <name evidence="1" type="primary">sucC</name>
    <name type="ordered locus">TERTU_2519</name>
</gene>
<proteinExistence type="inferred from homology"/>
<reference key="1">
    <citation type="journal article" date="2009" name="PLoS ONE">
        <title>The complete genome of Teredinibacter turnerae T7901: an intracellular endosymbiont of marine wood-boring bivalves (shipworms).</title>
        <authorList>
            <person name="Yang J.C."/>
            <person name="Madupu R."/>
            <person name="Durkin A.S."/>
            <person name="Ekborg N.A."/>
            <person name="Pedamallu C.S."/>
            <person name="Hostetler J.B."/>
            <person name="Radune D."/>
            <person name="Toms B.S."/>
            <person name="Henrissat B."/>
            <person name="Coutinho P.M."/>
            <person name="Schwarz S."/>
            <person name="Field L."/>
            <person name="Trindade-Silva A.E."/>
            <person name="Soares C.A.G."/>
            <person name="Elshahawi S."/>
            <person name="Hanora A."/>
            <person name="Schmidt E.W."/>
            <person name="Haygood M.G."/>
            <person name="Posfai J."/>
            <person name="Benner J."/>
            <person name="Madinger C."/>
            <person name="Nove J."/>
            <person name="Anton B."/>
            <person name="Chaudhary K."/>
            <person name="Foster J."/>
            <person name="Holman A."/>
            <person name="Kumar S."/>
            <person name="Lessard P.A."/>
            <person name="Luyten Y.A."/>
            <person name="Slatko B."/>
            <person name="Wood N."/>
            <person name="Wu B."/>
            <person name="Teplitski M."/>
            <person name="Mougous J.D."/>
            <person name="Ward N."/>
            <person name="Eisen J.A."/>
            <person name="Badger J.H."/>
            <person name="Distel D.L."/>
        </authorList>
    </citation>
    <scope>NUCLEOTIDE SEQUENCE [LARGE SCALE GENOMIC DNA]</scope>
    <source>
        <strain>ATCC 39867 / T7901</strain>
    </source>
</reference>
<sequence>MNLHEYQGKQLFAEYGLPVSKGVAAETPAEAASAAGILGGDTWVVKAQVHAGGRGKAGGVKLVKSKAEIEEFAKQWLGKNLVTYQTDENGQPVSRILVETCTDIDQELYLGAVVDRSTRRIVFMASTEGGVEIEKVAEETPEKILKAIIDPLAGAQPYQARDLAFKLGLEGKQIKQFTQIFLGLAKMFKEKDLALLEINPLVITKEGDLHCLDAKINIDGNALYRQPALKEMHDPSQEDEREAHAAKWELNYVALDGNIGCMVNGAGLAMGTMDIVKLHGGQPANFLDVGGGATKERVVEAFKIILSDESVSAVLINIFGGIVRCDLIAEGVIGAVEEVGVKIPVVCRLEGNNAELGAKVLADSGLNIIAATSLTDAAEQVVKAAKGDA</sequence>
<dbReference type="EC" id="6.2.1.5" evidence="1"/>
<dbReference type="EMBL" id="CP001614">
    <property type="protein sequence ID" value="ACR13485.1"/>
    <property type="molecule type" value="Genomic_DNA"/>
</dbReference>
<dbReference type="RefSeq" id="WP_015819599.1">
    <property type="nucleotide sequence ID" value="NC_012997.1"/>
</dbReference>
<dbReference type="SMR" id="C5BL83"/>
<dbReference type="STRING" id="377629.TERTU_2519"/>
<dbReference type="KEGG" id="ttu:TERTU_2519"/>
<dbReference type="eggNOG" id="COG0045">
    <property type="taxonomic scope" value="Bacteria"/>
</dbReference>
<dbReference type="HOGENOM" id="CLU_037430_0_2_6"/>
<dbReference type="OrthoDB" id="9802602at2"/>
<dbReference type="UniPathway" id="UPA00223">
    <property type="reaction ID" value="UER00999"/>
</dbReference>
<dbReference type="Proteomes" id="UP000009080">
    <property type="component" value="Chromosome"/>
</dbReference>
<dbReference type="GO" id="GO:0005829">
    <property type="term" value="C:cytosol"/>
    <property type="evidence" value="ECO:0007669"/>
    <property type="project" value="TreeGrafter"/>
</dbReference>
<dbReference type="GO" id="GO:0042709">
    <property type="term" value="C:succinate-CoA ligase complex"/>
    <property type="evidence" value="ECO:0007669"/>
    <property type="project" value="TreeGrafter"/>
</dbReference>
<dbReference type="GO" id="GO:0005524">
    <property type="term" value="F:ATP binding"/>
    <property type="evidence" value="ECO:0007669"/>
    <property type="project" value="UniProtKB-UniRule"/>
</dbReference>
<dbReference type="GO" id="GO:0000287">
    <property type="term" value="F:magnesium ion binding"/>
    <property type="evidence" value="ECO:0007669"/>
    <property type="project" value="UniProtKB-UniRule"/>
</dbReference>
<dbReference type="GO" id="GO:0004775">
    <property type="term" value="F:succinate-CoA ligase (ADP-forming) activity"/>
    <property type="evidence" value="ECO:0007669"/>
    <property type="project" value="UniProtKB-UniRule"/>
</dbReference>
<dbReference type="GO" id="GO:0004776">
    <property type="term" value="F:succinate-CoA ligase (GDP-forming) activity"/>
    <property type="evidence" value="ECO:0007669"/>
    <property type="project" value="RHEA"/>
</dbReference>
<dbReference type="GO" id="GO:0006104">
    <property type="term" value="P:succinyl-CoA metabolic process"/>
    <property type="evidence" value="ECO:0007669"/>
    <property type="project" value="TreeGrafter"/>
</dbReference>
<dbReference type="GO" id="GO:0006099">
    <property type="term" value="P:tricarboxylic acid cycle"/>
    <property type="evidence" value="ECO:0007669"/>
    <property type="project" value="UniProtKB-UniRule"/>
</dbReference>
<dbReference type="FunFam" id="3.30.1490.20:FF:000002">
    <property type="entry name" value="Succinate--CoA ligase [ADP-forming] subunit beta"/>
    <property type="match status" value="1"/>
</dbReference>
<dbReference type="FunFam" id="3.30.470.20:FF:000002">
    <property type="entry name" value="Succinate--CoA ligase [ADP-forming] subunit beta"/>
    <property type="match status" value="1"/>
</dbReference>
<dbReference type="FunFam" id="3.40.50.261:FF:000001">
    <property type="entry name" value="Succinate--CoA ligase [ADP-forming] subunit beta"/>
    <property type="match status" value="1"/>
</dbReference>
<dbReference type="Gene3D" id="3.30.1490.20">
    <property type="entry name" value="ATP-grasp fold, A domain"/>
    <property type="match status" value="1"/>
</dbReference>
<dbReference type="Gene3D" id="3.30.470.20">
    <property type="entry name" value="ATP-grasp fold, B domain"/>
    <property type="match status" value="1"/>
</dbReference>
<dbReference type="Gene3D" id="3.40.50.261">
    <property type="entry name" value="Succinyl-CoA synthetase domains"/>
    <property type="match status" value="1"/>
</dbReference>
<dbReference type="HAMAP" id="MF_00558">
    <property type="entry name" value="Succ_CoA_beta"/>
    <property type="match status" value="1"/>
</dbReference>
<dbReference type="InterPro" id="IPR011761">
    <property type="entry name" value="ATP-grasp"/>
</dbReference>
<dbReference type="InterPro" id="IPR013650">
    <property type="entry name" value="ATP-grasp_succ-CoA_synth-type"/>
</dbReference>
<dbReference type="InterPro" id="IPR013815">
    <property type="entry name" value="ATP_grasp_subdomain_1"/>
</dbReference>
<dbReference type="InterPro" id="IPR017866">
    <property type="entry name" value="Succ-CoA_synthase_bsu_CS"/>
</dbReference>
<dbReference type="InterPro" id="IPR005811">
    <property type="entry name" value="SUCC_ACL_C"/>
</dbReference>
<dbReference type="InterPro" id="IPR005809">
    <property type="entry name" value="Succ_CoA_ligase-like_bsu"/>
</dbReference>
<dbReference type="InterPro" id="IPR016102">
    <property type="entry name" value="Succinyl-CoA_synth-like"/>
</dbReference>
<dbReference type="NCBIfam" id="NF001913">
    <property type="entry name" value="PRK00696.1"/>
    <property type="match status" value="1"/>
</dbReference>
<dbReference type="NCBIfam" id="TIGR01016">
    <property type="entry name" value="sucCoAbeta"/>
    <property type="match status" value="1"/>
</dbReference>
<dbReference type="PANTHER" id="PTHR11815:SF10">
    <property type="entry name" value="SUCCINATE--COA LIGASE [GDP-FORMING] SUBUNIT BETA, MITOCHONDRIAL"/>
    <property type="match status" value="1"/>
</dbReference>
<dbReference type="PANTHER" id="PTHR11815">
    <property type="entry name" value="SUCCINYL-COA SYNTHETASE BETA CHAIN"/>
    <property type="match status" value="1"/>
</dbReference>
<dbReference type="Pfam" id="PF08442">
    <property type="entry name" value="ATP-grasp_2"/>
    <property type="match status" value="1"/>
</dbReference>
<dbReference type="Pfam" id="PF00549">
    <property type="entry name" value="Ligase_CoA"/>
    <property type="match status" value="1"/>
</dbReference>
<dbReference type="PIRSF" id="PIRSF001554">
    <property type="entry name" value="SucCS_beta"/>
    <property type="match status" value="1"/>
</dbReference>
<dbReference type="SUPFAM" id="SSF56059">
    <property type="entry name" value="Glutathione synthetase ATP-binding domain-like"/>
    <property type="match status" value="1"/>
</dbReference>
<dbReference type="SUPFAM" id="SSF52210">
    <property type="entry name" value="Succinyl-CoA synthetase domains"/>
    <property type="match status" value="1"/>
</dbReference>
<dbReference type="PROSITE" id="PS50975">
    <property type="entry name" value="ATP_GRASP"/>
    <property type="match status" value="1"/>
</dbReference>
<dbReference type="PROSITE" id="PS01217">
    <property type="entry name" value="SUCCINYL_COA_LIG_3"/>
    <property type="match status" value="1"/>
</dbReference>
<organism>
    <name type="scientific">Teredinibacter turnerae (strain ATCC 39867 / T7901)</name>
    <dbReference type="NCBI Taxonomy" id="377629"/>
    <lineage>
        <taxon>Bacteria</taxon>
        <taxon>Pseudomonadati</taxon>
        <taxon>Pseudomonadota</taxon>
        <taxon>Gammaproteobacteria</taxon>
        <taxon>Cellvibrionales</taxon>
        <taxon>Cellvibrionaceae</taxon>
        <taxon>Teredinibacter</taxon>
    </lineage>
</organism>
<evidence type="ECO:0000255" key="1">
    <source>
        <dbReference type="HAMAP-Rule" id="MF_00558"/>
    </source>
</evidence>
<comment type="function">
    <text evidence="1">Succinyl-CoA synthetase functions in the citric acid cycle (TCA), coupling the hydrolysis of succinyl-CoA to the synthesis of either ATP or GTP and thus represents the only step of substrate-level phosphorylation in the TCA. The beta subunit provides nucleotide specificity of the enzyme and binds the substrate succinate, while the binding sites for coenzyme A and phosphate are found in the alpha subunit.</text>
</comment>
<comment type="catalytic activity">
    <reaction evidence="1">
        <text>succinate + ATP + CoA = succinyl-CoA + ADP + phosphate</text>
        <dbReference type="Rhea" id="RHEA:17661"/>
        <dbReference type="ChEBI" id="CHEBI:30031"/>
        <dbReference type="ChEBI" id="CHEBI:30616"/>
        <dbReference type="ChEBI" id="CHEBI:43474"/>
        <dbReference type="ChEBI" id="CHEBI:57287"/>
        <dbReference type="ChEBI" id="CHEBI:57292"/>
        <dbReference type="ChEBI" id="CHEBI:456216"/>
        <dbReference type="EC" id="6.2.1.5"/>
    </reaction>
    <physiologicalReaction direction="right-to-left" evidence="1">
        <dbReference type="Rhea" id="RHEA:17663"/>
    </physiologicalReaction>
</comment>
<comment type="catalytic activity">
    <reaction evidence="1">
        <text>GTP + succinate + CoA = succinyl-CoA + GDP + phosphate</text>
        <dbReference type="Rhea" id="RHEA:22120"/>
        <dbReference type="ChEBI" id="CHEBI:30031"/>
        <dbReference type="ChEBI" id="CHEBI:37565"/>
        <dbReference type="ChEBI" id="CHEBI:43474"/>
        <dbReference type="ChEBI" id="CHEBI:57287"/>
        <dbReference type="ChEBI" id="CHEBI:57292"/>
        <dbReference type="ChEBI" id="CHEBI:58189"/>
    </reaction>
    <physiologicalReaction direction="right-to-left" evidence="1">
        <dbReference type="Rhea" id="RHEA:22122"/>
    </physiologicalReaction>
</comment>
<comment type="cofactor">
    <cofactor evidence="1">
        <name>Mg(2+)</name>
        <dbReference type="ChEBI" id="CHEBI:18420"/>
    </cofactor>
    <text evidence="1">Binds 1 Mg(2+) ion per subunit.</text>
</comment>
<comment type="pathway">
    <text evidence="1">Carbohydrate metabolism; tricarboxylic acid cycle; succinate from succinyl-CoA (ligase route): step 1/1.</text>
</comment>
<comment type="subunit">
    <text evidence="1">Heterotetramer of two alpha and two beta subunits.</text>
</comment>
<comment type="similarity">
    <text evidence="1">Belongs to the succinate/malate CoA ligase beta subunit family.</text>
</comment>
<accession>C5BL83</accession>
<name>SUCC_TERTT</name>